<sequence length="161" mass="17531">MDKEVEVPPAGDSPTCIEAIDVMRIMEAIPHRYPFLLIDRMVDIVLGSSAVGIKNVTASEPHFQGHFPARPVMPGVLIIEAMAQTAATLVVLTLGPAFEGKLVYFMTIDGAKFRRPVGPGDQLRIHVEKERSRANVWKFKGIARVDGVSVAEATFSAMIMG</sequence>
<organism>
    <name type="scientific">Gluconacetobacter diazotrophicus (strain ATCC 49037 / DSM 5601 / CCUG 37298 / CIP 103539 / LMG 7603 / PAl5)</name>
    <dbReference type="NCBI Taxonomy" id="272568"/>
    <lineage>
        <taxon>Bacteria</taxon>
        <taxon>Pseudomonadati</taxon>
        <taxon>Pseudomonadota</taxon>
        <taxon>Alphaproteobacteria</taxon>
        <taxon>Acetobacterales</taxon>
        <taxon>Acetobacteraceae</taxon>
        <taxon>Gluconacetobacter</taxon>
    </lineage>
</organism>
<proteinExistence type="inferred from homology"/>
<dbReference type="EC" id="4.2.1.59" evidence="1"/>
<dbReference type="EMBL" id="AM889285">
    <property type="protein sequence ID" value="CAP56085.1"/>
    <property type="molecule type" value="Genomic_DNA"/>
</dbReference>
<dbReference type="EMBL" id="CP001189">
    <property type="protein sequence ID" value="ACI50158.1"/>
    <property type="molecule type" value="Genomic_DNA"/>
</dbReference>
<dbReference type="RefSeq" id="WP_012225952.1">
    <property type="nucleotide sequence ID" value="NC_010125.1"/>
</dbReference>
<dbReference type="SMR" id="A9HKU2"/>
<dbReference type="STRING" id="272568.GDI2142"/>
<dbReference type="KEGG" id="gdi:GDI2142"/>
<dbReference type="KEGG" id="gdj:Gdia_0362"/>
<dbReference type="eggNOG" id="COG0764">
    <property type="taxonomic scope" value="Bacteria"/>
</dbReference>
<dbReference type="HOGENOM" id="CLU_078912_1_2_5"/>
<dbReference type="OrthoDB" id="9772788at2"/>
<dbReference type="Proteomes" id="UP000001176">
    <property type="component" value="Chromosome"/>
</dbReference>
<dbReference type="GO" id="GO:0005737">
    <property type="term" value="C:cytoplasm"/>
    <property type="evidence" value="ECO:0007669"/>
    <property type="project" value="UniProtKB-SubCell"/>
</dbReference>
<dbReference type="GO" id="GO:0016020">
    <property type="term" value="C:membrane"/>
    <property type="evidence" value="ECO:0007669"/>
    <property type="project" value="GOC"/>
</dbReference>
<dbReference type="GO" id="GO:0019171">
    <property type="term" value="F:(3R)-hydroxyacyl-[acyl-carrier-protein] dehydratase activity"/>
    <property type="evidence" value="ECO:0007669"/>
    <property type="project" value="UniProtKB-EC"/>
</dbReference>
<dbReference type="GO" id="GO:0006633">
    <property type="term" value="P:fatty acid biosynthetic process"/>
    <property type="evidence" value="ECO:0007669"/>
    <property type="project" value="UniProtKB-UniRule"/>
</dbReference>
<dbReference type="GO" id="GO:0009245">
    <property type="term" value="P:lipid A biosynthetic process"/>
    <property type="evidence" value="ECO:0007669"/>
    <property type="project" value="UniProtKB-UniRule"/>
</dbReference>
<dbReference type="CDD" id="cd01288">
    <property type="entry name" value="FabZ"/>
    <property type="match status" value="1"/>
</dbReference>
<dbReference type="FunFam" id="3.10.129.10:FF:000001">
    <property type="entry name" value="3-hydroxyacyl-[acyl-carrier-protein] dehydratase FabZ"/>
    <property type="match status" value="1"/>
</dbReference>
<dbReference type="Gene3D" id="3.10.129.10">
    <property type="entry name" value="Hotdog Thioesterase"/>
    <property type="match status" value="1"/>
</dbReference>
<dbReference type="HAMAP" id="MF_00406">
    <property type="entry name" value="FabZ"/>
    <property type="match status" value="1"/>
</dbReference>
<dbReference type="InterPro" id="IPR013114">
    <property type="entry name" value="FabA_FabZ"/>
</dbReference>
<dbReference type="InterPro" id="IPR010084">
    <property type="entry name" value="FabZ"/>
</dbReference>
<dbReference type="InterPro" id="IPR029069">
    <property type="entry name" value="HotDog_dom_sf"/>
</dbReference>
<dbReference type="NCBIfam" id="TIGR01750">
    <property type="entry name" value="fabZ"/>
    <property type="match status" value="1"/>
</dbReference>
<dbReference type="NCBIfam" id="NF000582">
    <property type="entry name" value="PRK00006.1"/>
    <property type="match status" value="1"/>
</dbReference>
<dbReference type="PANTHER" id="PTHR30272">
    <property type="entry name" value="3-HYDROXYACYL-[ACYL-CARRIER-PROTEIN] DEHYDRATASE"/>
    <property type="match status" value="1"/>
</dbReference>
<dbReference type="PANTHER" id="PTHR30272:SF1">
    <property type="entry name" value="3-HYDROXYACYL-[ACYL-CARRIER-PROTEIN] DEHYDRATASE"/>
    <property type="match status" value="1"/>
</dbReference>
<dbReference type="Pfam" id="PF07977">
    <property type="entry name" value="FabA"/>
    <property type="match status" value="1"/>
</dbReference>
<dbReference type="SUPFAM" id="SSF54637">
    <property type="entry name" value="Thioesterase/thiol ester dehydrase-isomerase"/>
    <property type="match status" value="1"/>
</dbReference>
<reference key="1">
    <citation type="journal article" date="2009" name="BMC Genomics">
        <title>Complete genome sequence of the sugarcane nitrogen-fixing endophyte Gluconacetobacter diazotrophicus Pal5.</title>
        <authorList>
            <person name="Bertalan M."/>
            <person name="Albano R."/>
            <person name="de Padua V."/>
            <person name="Rouws L."/>
            <person name="Rojas C."/>
            <person name="Hemerly A."/>
            <person name="Teixeira K."/>
            <person name="Schwab S."/>
            <person name="Araujo J."/>
            <person name="Oliveira A."/>
            <person name="Franca L."/>
            <person name="Magalhaes V."/>
            <person name="Alqueres S."/>
            <person name="Cardoso A."/>
            <person name="Almeida W."/>
            <person name="Loureiro M.M."/>
            <person name="Nogueira E."/>
            <person name="Cidade D."/>
            <person name="Oliveira D."/>
            <person name="Simao T."/>
            <person name="Macedo J."/>
            <person name="Valadao A."/>
            <person name="Dreschsel M."/>
            <person name="Freitas F."/>
            <person name="Vidal M."/>
            <person name="Guedes H."/>
            <person name="Rodrigues E."/>
            <person name="Meneses C."/>
            <person name="Brioso P."/>
            <person name="Pozzer L."/>
            <person name="Figueiredo D."/>
            <person name="Montano H."/>
            <person name="Junior J."/>
            <person name="de Souza Filho G."/>
            <person name="Martin Quintana Flores V."/>
            <person name="Ferreira B."/>
            <person name="Branco A."/>
            <person name="Gonzalez P."/>
            <person name="Guillobel H."/>
            <person name="Lemos M."/>
            <person name="Seibel L."/>
            <person name="Macedo J."/>
            <person name="Alves-Ferreira M."/>
            <person name="Sachetto-Martins G."/>
            <person name="Coelho A."/>
            <person name="Santos E."/>
            <person name="Amaral G."/>
            <person name="Neves A."/>
            <person name="Pacheco A.B."/>
            <person name="Carvalho D."/>
            <person name="Lery L."/>
            <person name="Bisch P."/>
            <person name="Rossle S.C."/>
            <person name="Urmenyi T."/>
            <person name="Rael Pereira A."/>
            <person name="Silva R."/>
            <person name="Rondinelli E."/>
            <person name="von Kruger W."/>
            <person name="Martins O."/>
            <person name="Baldani J.I."/>
            <person name="Ferreira P.C."/>
        </authorList>
    </citation>
    <scope>NUCLEOTIDE SEQUENCE [LARGE SCALE GENOMIC DNA]</scope>
    <source>
        <strain>ATCC 49037 / DSM 5601 / CCUG 37298 / CIP 103539 / LMG 7603 / PAl5</strain>
    </source>
</reference>
<reference key="2">
    <citation type="journal article" date="2010" name="Stand. Genomic Sci.">
        <title>Two genome sequences of the same bacterial strain, Gluconacetobacter diazotrophicus PAl 5, suggest a new standard in genome sequence submission.</title>
        <authorList>
            <person name="Giongo A."/>
            <person name="Tyler H.L."/>
            <person name="Zipperer U.N."/>
            <person name="Triplett E.W."/>
        </authorList>
    </citation>
    <scope>NUCLEOTIDE SEQUENCE [LARGE SCALE GENOMIC DNA]</scope>
    <source>
        <strain>ATCC 49037 / DSM 5601 / CCUG 37298 / CIP 103539 / LMG 7603 / PAl5</strain>
    </source>
</reference>
<comment type="function">
    <text evidence="1">Involved in unsaturated fatty acids biosynthesis. Catalyzes the dehydration of short chain beta-hydroxyacyl-ACPs and long chain saturated and unsaturated beta-hydroxyacyl-ACPs.</text>
</comment>
<comment type="catalytic activity">
    <reaction evidence="1">
        <text>a (3R)-hydroxyacyl-[ACP] = a (2E)-enoyl-[ACP] + H2O</text>
        <dbReference type="Rhea" id="RHEA:13097"/>
        <dbReference type="Rhea" id="RHEA-COMP:9925"/>
        <dbReference type="Rhea" id="RHEA-COMP:9945"/>
        <dbReference type="ChEBI" id="CHEBI:15377"/>
        <dbReference type="ChEBI" id="CHEBI:78784"/>
        <dbReference type="ChEBI" id="CHEBI:78827"/>
        <dbReference type="EC" id="4.2.1.59"/>
    </reaction>
</comment>
<comment type="subcellular location">
    <subcellularLocation>
        <location evidence="1">Cytoplasm</location>
    </subcellularLocation>
</comment>
<comment type="similarity">
    <text evidence="1">Belongs to the thioester dehydratase family. FabZ subfamily.</text>
</comment>
<accession>A9HKU2</accession>
<accession>B5ZLM9</accession>
<keyword id="KW-0963">Cytoplasm</keyword>
<keyword id="KW-0441">Lipid A biosynthesis</keyword>
<keyword id="KW-0444">Lipid biosynthesis</keyword>
<keyword id="KW-0443">Lipid metabolism</keyword>
<keyword id="KW-0456">Lyase</keyword>
<keyword id="KW-1185">Reference proteome</keyword>
<gene>
    <name evidence="1" type="primary">fabZ</name>
    <name type="ordered locus">GDI2142</name>
    <name type="ordered locus">Gdia_0362</name>
</gene>
<name>FABZ_GLUDA</name>
<feature type="chain" id="PRO_0000340777" description="3-hydroxyacyl-[acyl-carrier-protein] dehydratase FabZ">
    <location>
        <begin position="1"/>
        <end position="161"/>
    </location>
</feature>
<feature type="active site" evidence="1">
    <location>
        <position position="66"/>
    </location>
</feature>
<evidence type="ECO:0000255" key="1">
    <source>
        <dbReference type="HAMAP-Rule" id="MF_00406"/>
    </source>
</evidence>
<protein>
    <recommendedName>
        <fullName evidence="1">3-hydroxyacyl-[acyl-carrier-protein] dehydratase FabZ</fullName>
        <ecNumber evidence="1">4.2.1.59</ecNumber>
    </recommendedName>
    <alternativeName>
        <fullName evidence="1">(3R)-hydroxymyristoyl-[acyl-carrier-protein] dehydratase</fullName>
        <shortName evidence="1">(3R)-hydroxymyristoyl-ACP dehydrase</shortName>
    </alternativeName>
    <alternativeName>
        <fullName evidence="1">Beta-hydroxyacyl-ACP dehydratase</fullName>
    </alternativeName>
</protein>